<organism>
    <name type="scientific">Populus deltoides</name>
    <name type="common">Eastern poplar</name>
    <name type="synonym">Eastern cottonwood</name>
    <dbReference type="NCBI Taxonomy" id="3696"/>
    <lineage>
        <taxon>Eukaryota</taxon>
        <taxon>Viridiplantae</taxon>
        <taxon>Streptophyta</taxon>
        <taxon>Embryophyta</taxon>
        <taxon>Tracheophyta</taxon>
        <taxon>Spermatophyta</taxon>
        <taxon>Magnoliopsida</taxon>
        <taxon>eudicotyledons</taxon>
        <taxon>Gunneridae</taxon>
        <taxon>Pentapetalae</taxon>
        <taxon>rosids</taxon>
        <taxon>fabids</taxon>
        <taxon>Malpighiales</taxon>
        <taxon>Salicaceae</taxon>
        <taxon>Saliceae</taxon>
        <taxon>Populus</taxon>
    </lineage>
</organism>
<accession>P68860</accession>
<accession>P12171</accession>
<proteinExistence type="inferred from homology"/>
<comment type="function">
    <text evidence="1">May play a role in photosystem I and II biogenesis.</text>
</comment>
<comment type="subcellular location">
    <subcellularLocation>
        <location evidence="1">Plastid</location>
        <location evidence="1">Chloroplast thylakoid membrane</location>
        <topology evidence="1">Single-pass membrane protein</topology>
    </subcellularLocation>
</comment>
<comment type="similarity">
    <text evidence="1">Belongs to the PsbN family.</text>
</comment>
<comment type="caution">
    <text evidence="1">Originally thought to be a component of PSII; based on experiments in Synechocystis, N.tabacum and barley, and its absence from PSII in T.elongatus and T.vulcanus, this is probably not true.</text>
</comment>
<gene>
    <name evidence="1" type="primary">psbN</name>
</gene>
<sequence length="43" mass="4662">METATLVAISISGLLVSFTGYALYTAFGQPSQQLRDPFEEHGD</sequence>
<feature type="chain" id="PRO_0000207943" description="Protein PsbN">
    <location>
        <begin position="1"/>
        <end position="43"/>
    </location>
</feature>
<feature type="transmembrane region" description="Helical" evidence="1">
    <location>
        <begin position="5"/>
        <end position="27"/>
    </location>
</feature>
<geneLocation type="chloroplast"/>
<dbReference type="EMBL" id="Y13328">
    <property type="protein sequence ID" value="CAA73767.1"/>
    <property type="molecule type" value="Genomic_DNA"/>
</dbReference>
<dbReference type="RefSeq" id="YP_009555925.1">
    <property type="nucleotide sequence ID" value="NC_040929.1"/>
</dbReference>
<dbReference type="SMR" id="P68860"/>
<dbReference type="GeneID" id="39110650"/>
<dbReference type="GO" id="GO:0009535">
    <property type="term" value="C:chloroplast thylakoid membrane"/>
    <property type="evidence" value="ECO:0007669"/>
    <property type="project" value="UniProtKB-SubCell"/>
</dbReference>
<dbReference type="GO" id="GO:0015979">
    <property type="term" value="P:photosynthesis"/>
    <property type="evidence" value="ECO:0007669"/>
    <property type="project" value="InterPro"/>
</dbReference>
<dbReference type="HAMAP" id="MF_00293">
    <property type="entry name" value="PSII_PsbN"/>
    <property type="match status" value="1"/>
</dbReference>
<dbReference type="InterPro" id="IPR003398">
    <property type="entry name" value="PSII_PsbN"/>
</dbReference>
<dbReference type="PANTHER" id="PTHR35326">
    <property type="entry name" value="PROTEIN PSBN"/>
    <property type="match status" value="1"/>
</dbReference>
<dbReference type="PANTHER" id="PTHR35326:SF3">
    <property type="entry name" value="PROTEIN PSBN"/>
    <property type="match status" value="1"/>
</dbReference>
<dbReference type="Pfam" id="PF02468">
    <property type="entry name" value="PsbN"/>
    <property type="match status" value="1"/>
</dbReference>
<name>PSBN_POPDE</name>
<evidence type="ECO:0000255" key="1">
    <source>
        <dbReference type="HAMAP-Rule" id="MF_00293"/>
    </source>
</evidence>
<protein>
    <recommendedName>
        <fullName evidence="1">Protein PsbN</fullName>
    </recommendedName>
</protein>
<keyword id="KW-0150">Chloroplast</keyword>
<keyword id="KW-0472">Membrane</keyword>
<keyword id="KW-0934">Plastid</keyword>
<keyword id="KW-0793">Thylakoid</keyword>
<keyword id="KW-0812">Transmembrane</keyword>
<keyword id="KW-1133">Transmembrane helix</keyword>
<reference key="1">
    <citation type="submission" date="1997-05" db="EMBL/GenBank/DDBJ databases">
        <authorList>
            <person name="Dixij R."/>
        </authorList>
    </citation>
    <scope>NUCLEOTIDE SEQUENCE [GENOMIC DNA]</scope>
    <source>
        <strain>cv. Stoneville D121</strain>
        <tissue>Leaf</tissue>
    </source>
</reference>